<feature type="chain" id="PRO_0000153424" description="Histidinol-phosphate aminotransferase">
    <location>
        <begin position="1"/>
        <end position="350"/>
    </location>
</feature>
<feature type="modified residue" description="N6-(pyridoxal phosphate)lysine" evidence="1">
    <location>
        <position position="210"/>
    </location>
</feature>
<name>HIS8_PSEU2</name>
<dbReference type="EC" id="2.6.1.9" evidence="1"/>
<dbReference type="EMBL" id="CP000075">
    <property type="protein sequence ID" value="AAY39162.1"/>
    <property type="molecule type" value="Genomic_DNA"/>
</dbReference>
<dbReference type="RefSeq" id="WP_011268858.1">
    <property type="nucleotide sequence ID" value="NC_007005.1"/>
</dbReference>
<dbReference type="RefSeq" id="YP_237200.1">
    <property type="nucleotide sequence ID" value="NC_007005.1"/>
</dbReference>
<dbReference type="SMR" id="Q4ZNW0"/>
<dbReference type="STRING" id="205918.Psyr_4132"/>
<dbReference type="KEGG" id="psb:Psyr_4132"/>
<dbReference type="PATRIC" id="fig|205918.7.peg.4252"/>
<dbReference type="eggNOG" id="COG0079">
    <property type="taxonomic scope" value="Bacteria"/>
</dbReference>
<dbReference type="HOGENOM" id="CLU_017584_3_0_6"/>
<dbReference type="OrthoDB" id="9809616at2"/>
<dbReference type="UniPathway" id="UPA00031">
    <property type="reaction ID" value="UER00012"/>
</dbReference>
<dbReference type="Proteomes" id="UP000000426">
    <property type="component" value="Chromosome"/>
</dbReference>
<dbReference type="GO" id="GO:0004400">
    <property type="term" value="F:histidinol-phosphate transaminase activity"/>
    <property type="evidence" value="ECO:0007669"/>
    <property type="project" value="UniProtKB-UniRule"/>
</dbReference>
<dbReference type="GO" id="GO:0030170">
    <property type="term" value="F:pyridoxal phosphate binding"/>
    <property type="evidence" value="ECO:0007669"/>
    <property type="project" value="InterPro"/>
</dbReference>
<dbReference type="GO" id="GO:0000105">
    <property type="term" value="P:L-histidine biosynthetic process"/>
    <property type="evidence" value="ECO:0007669"/>
    <property type="project" value="UniProtKB-UniRule"/>
</dbReference>
<dbReference type="CDD" id="cd00609">
    <property type="entry name" value="AAT_like"/>
    <property type="match status" value="1"/>
</dbReference>
<dbReference type="Gene3D" id="3.90.1150.10">
    <property type="entry name" value="Aspartate Aminotransferase, domain 1"/>
    <property type="match status" value="1"/>
</dbReference>
<dbReference type="Gene3D" id="3.40.640.10">
    <property type="entry name" value="Type I PLP-dependent aspartate aminotransferase-like (Major domain)"/>
    <property type="match status" value="1"/>
</dbReference>
<dbReference type="HAMAP" id="MF_01023">
    <property type="entry name" value="HisC_aminotrans_2"/>
    <property type="match status" value="1"/>
</dbReference>
<dbReference type="InterPro" id="IPR001917">
    <property type="entry name" value="Aminotrans_II_pyridoxalP_BS"/>
</dbReference>
<dbReference type="InterPro" id="IPR004839">
    <property type="entry name" value="Aminotransferase_I/II_large"/>
</dbReference>
<dbReference type="InterPro" id="IPR005861">
    <property type="entry name" value="HisP_aminotrans"/>
</dbReference>
<dbReference type="InterPro" id="IPR015424">
    <property type="entry name" value="PyrdxlP-dep_Trfase"/>
</dbReference>
<dbReference type="InterPro" id="IPR015421">
    <property type="entry name" value="PyrdxlP-dep_Trfase_major"/>
</dbReference>
<dbReference type="InterPro" id="IPR015422">
    <property type="entry name" value="PyrdxlP-dep_Trfase_small"/>
</dbReference>
<dbReference type="NCBIfam" id="TIGR01141">
    <property type="entry name" value="hisC"/>
    <property type="match status" value="1"/>
</dbReference>
<dbReference type="PANTHER" id="PTHR42885:SF2">
    <property type="entry name" value="HISTIDINOL-PHOSPHATE AMINOTRANSFERASE"/>
    <property type="match status" value="1"/>
</dbReference>
<dbReference type="PANTHER" id="PTHR42885">
    <property type="entry name" value="HISTIDINOL-PHOSPHATE AMINOTRANSFERASE-RELATED"/>
    <property type="match status" value="1"/>
</dbReference>
<dbReference type="Pfam" id="PF00155">
    <property type="entry name" value="Aminotran_1_2"/>
    <property type="match status" value="1"/>
</dbReference>
<dbReference type="SUPFAM" id="SSF53383">
    <property type="entry name" value="PLP-dependent transferases"/>
    <property type="match status" value="1"/>
</dbReference>
<dbReference type="PROSITE" id="PS00599">
    <property type="entry name" value="AA_TRANSFER_CLASS_2"/>
    <property type="match status" value="1"/>
</dbReference>
<gene>
    <name evidence="1" type="primary">hisC</name>
    <name type="ordered locus">Psyr_4132</name>
</gene>
<evidence type="ECO:0000255" key="1">
    <source>
        <dbReference type="HAMAP-Rule" id="MF_01023"/>
    </source>
</evidence>
<reference key="1">
    <citation type="journal article" date="2005" name="Proc. Natl. Acad. Sci. U.S.A.">
        <title>Comparison of the complete genome sequences of Pseudomonas syringae pv. syringae B728a and pv. tomato DC3000.</title>
        <authorList>
            <person name="Feil H."/>
            <person name="Feil W.S."/>
            <person name="Chain P."/>
            <person name="Larimer F."/>
            <person name="Dibartolo G."/>
            <person name="Copeland A."/>
            <person name="Lykidis A."/>
            <person name="Trong S."/>
            <person name="Nolan M."/>
            <person name="Goltsman E."/>
            <person name="Thiel J."/>
            <person name="Malfatti S."/>
            <person name="Loper J.E."/>
            <person name="Lapidus A."/>
            <person name="Detter J.C."/>
            <person name="Land M."/>
            <person name="Richardson P.M."/>
            <person name="Kyrpides N.C."/>
            <person name="Ivanova N."/>
            <person name="Lindow S.E."/>
        </authorList>
    </citation>
    <scope>NUCLEOTIDE SEQUENCE [LARGE SCALE GENOMIC DNA]</scope>
    <source>
        <strain>B728a</strain>
    </source>
</reference>
<protein>
    <recommendedName>
        <fullName evidence="1">Histidinol-phosphate aminotransferase</fullName>
        <ecNumber evidence="1">2.6.1.9</ecNumber>
    </recommendedName>
    <alternativeName>
        <fullName evidence="1">Imidazole acetol-phosphate transaminase</fullName>
    </alternativeName>
</protein>
<proteinExistence type="inferred from homology"/>
<comment type="catalytic activity">
    <reaction evidence="1">
        <text>L-histidinol phosphate + 2-oxoglutarate = 3-(imidazol-4-yl)-2-oxopropyl phosphate + L-glutamate</text>
        <dbReference type="Rhea" id="RHEA:23744"/>
        <dbReference type="ChEBI" id="CHEBI:16810"/>
        <dbReference type="ChEBI" id="CHEBI:29985"/>
        <dbReference type="ChEBI" id="CHEBI:57766"/>
        <dbReference type="ChEBI" id="CHEBI:57980"/>
        <dbReference type="EC" id="2.6.1.9"/>
    </reaction>
</comment>
<comment type="cofactor">
    <cofactor evidence="1">
        <name>pyridoxal 5'-phosphate</name>
        <dbReference type="ChEBI" id="CHEBI:597326"/>
    </cofactor>
</comment>
<comment type="pathway">
    <text evidence="1">Amino-acid biosynthesis; L-histidine biosynthesis; L-histidine from 5-phospho-alpha-D-ribose 1-diphosphate: step 7/9.</text>
</comment>
<comment type="subunit">
    <text evidence="1">Homodimer.</text>
</comment>
<comment type="similarity">
    <text evidence="1">Belongs to the class-II pyridoxal-phosphate-dependent aminotransferase family. Histidinol-phosphate aminotransferase subfamily.</text>
</comment>
<accession>Q4ZNW0</accession>
<sequence>MSKFWSPFVSDLVPYVPGEQPKLTRLVKLNTNENPYGPSPKAIDAMRTALTDDLRLYPDPNSDLLKHAVADYYKVQPSQVFLGNGSDEVLAHIFHALFQHDAPLLFPDISYSFYPVYCGLYGIDYETVPLDEQFQIRAEDYARPNAGIIFPNPNAPTGCLLGLDKVEQIIKASPDSVVVVDEAYIDFGGETAITLVDRYPNLLVTQTLSKSRSLAGLRVGLAVGHPDLIEALERVKNSFNSYPLDRMANVGGAAAFEDREHFETTRNKVIESREALVEQLQGKGFEVLPSAANFIFARHPRHDAAALAAKLREQGVIVRHFKQQRIAQFLRISIGTPEQHQALLEGLSDL</sequence>
<organism>
    <name type="scientific">Pseudomonas syringae pv. syringae (strain B728a)</name>
    <dbReference type="NCBI Taxonomy" id="205918"/>
    <lineage>
        <taxon>Bacteria</taxon>
        <taxon>Pseudomonadati</taxon>
        <taxon>Pseudomonadota</taxon>
        <taxon>Gammaproteobacteria</taxon>
        <taxon>Pseudomonadales</taxon>
        <taxon>Pseudomonadaceae</taxon>
        <taxon>Pseudomonas</taxon>
        <taxon>Pseudomonas syringae</taxon>
    </lineage>
</organism>
<keyword id="KW-0028">Amino-acid biosynthesis</keyword>
<keyword id="KW-0032">Aminotransferase</keyword>
<keyword id="KW-0368">Histidine biosynthesis</keyword>
<keyword id="KW-0663">Pyridoxal phosphate</keyword>
<keyword id="KW-0808">Transferase</keyword>